<comment type="function">
    <text evidence="1">NDH shuttles electrons from NAD(P)H:plastoquinone, via FMN and iron-sulfur (Fe-S) centers, to quinones in the photosynthetic chain and possibly in a chloroplast respiratory chain. The immediate electron acceptor for the enzyme in this species is believed to be plastoquinone. Couples the redox reaction to proton translocation, and thus conserves the redox energy in a proton gradient.</text>
</comment>
<comment type="catalytic activity">
    <reaction evidence="1">
        <text>a plastoquinone + NADH + (n+1) H(+)(in) = a plastoquinol + NAD(+) + n H(+)(out)</text>
        <dbReference type="Rhea" id="RHEA:42608"/>
        <dbReference type="Rhea" id="RHEA-COMP:9561"/>
        <dbReference type="Rhea" id="RHEA-COMP:9562"/>
        <dbReference type="ChEBI" id="CHEBI:15378"/>
        <dbReference type="ChEBI" id="CHEBI:17757"/>
        <dbReference type="ChEBI" id="CHEBI:57540"/>
        <dbReference type="ChEBI" id="CHEBI:57945"/>
        <dbReference type="ChEBI" id="CHEBI:62192"/>
    </reaction>
</comment>
<comment type="catalytic activity">
    <reaction evidence="1">
        <text>a plastoquinone + NADPH + (n+1) H(+)(in) = a plastoquinol + NADP(+) + n H(+)(out)</text>
        <dbReference type="Rhea" id="RHEA:42612"/>
        <dbReference type="Rhea" id="RHEA-COMP:9561"/>
        <dbReference type="Rhea" id="RHEA-COMP:9562"/>
        <dbReference type="ChEBI" id="CHEBI:15378"/>
        <dbReference type="ChEBI" id="CHEBI:17757"/>
        <dbReference type="ChEBI" id="CHEBI:57783"/>
        <dbReference type="ChEBI" id="CHEBI:58349"/>
        <dbReference type="ChEBI" id="CHEBI:62192"/>
    </reaction>
</comment>
<comment type="subunit">
    <text evidence="1">NDH is composed of at least 16 different subunits, 5 of which are encoded in the nucleus.</text>
</comment>
<comment type="subcellular location">
    <subcellularLocation>
        <location evidence="1">Plastid</location>
        <location evidence="1">Chloroplast thylakoid membrane</location>
        <topology evidence="1">Multi-pass membrane protein</topology>
    </subcellularLocation>
</comment>
<comment type="similarity">
    <text evidence="1">Belongs to the complex I subunit 4L family.</text>
</comment>
<name>NU4LC_PHYPA</name>
<accession>Q6YXQ1</accession>
<geneLocation type="chloroplast"/>
<proteinExistence type="inferred from homology"/>
<gene>
    <name evidence="1" type="primary">ndhE</name>
</gene>
<evidence type="ECO:0000255" key="1">
    <source>
        <dbReference type="HAMAP-Rule" id="MF_01456"/>
    </source>
</evidence>
<dbReference type="EC" id="7.1.1.-" evidence="1"/>
<dbReference type="EMBL" id="AP005672">
    <property type="protein sequence ID" value="BAC85090.1"/>
    <property type="molecule type" value="Genomic_DNA"/>
</dbReference>
<dbReference type="RefSeq" id="NP_904240.1">
    <property type="nucleotide sequence ID" value="NC_005087.2"/>
</dbReference>
<dbReference type="RefSeq" id="YP_009477570.1">
    <property type="nucleotide sequence ID" value="NC_037465.1"/>
</dbReference>
<dbReference type="SMR" id="Q6YXQ1"/>
<dbReference type="FunCoup" id="Q6YXQ1">
    <property type="interactions" value="79"/>
</dbReference>
<dbReference type="STRING" id="3218.Q6YXQ1"/>
<dbReference type="GeneID" id="2546802"/>
<dbReference type="GeneID" id="36487215"/>
<dbReference type="KEGG" id="ppp:2546802"/>
<dbReference type="InParanoid" id="Q6YXQ1"/>
<dbReference type="OrthoDB" id="1925110at2759"/>
<dbReference type="Proteomes" id="UP000006727">
    <property type="component" value="Chloroplast"/>
</dbReference>
<dbReference type="GO" id="GO:0009535">
    <property type="term" value="C:chloroplast thylakoid membrane"/>
    <property type="evidence" value="ECO:0007669"/>
    <property type="project" value="UniProtKB-SubCell"/>
</dbReference>
<dbReference type="GO" id="GO:0030964">
    <property type="term" value="C:NADH dehydrogenase complex"/>
    <property type="evidence" value="ECO:0000318"/>
    <property type="project" value="GO_Central"/>
</dbReference>
<dbReference type="GO" id="GO:0016655">
    <property type="term" value="F:oxidoreductase activity, acting on NAD(P)H, quinone or similar compound as acceptor"/>
    <property type="evidence" value="ECO:0007669"/>
    <property type="project" value="UniProtKB-UniRule"/>
</dbReference>
<dbReference type="GO" id="GO:0048038">
    <property type="term" value="F:quinone binding"/>
    <property type="evidence" value="ECO:0007669"/>
    <property type="project" value="UniProtKB-KW"/>
</dbReference>
<dbReference type="GO" id="GO:0042773">
    <property type="term" value="P:ATP synthesis coupled electron transport"/>
    <property type="evidence" value="ECO:0007669"/>
    <property type="project" value="InterPro"/>
</dbReference>
<dbReference type="GO" id="GO:0019684">
    <property type="term" value="P:photosynthesis, light reaction"/>
    <property type="evidence" value="ECO:0007669"/>
    <property type="project" value="UniProtKB-UniRule"/>
</dbReference>
<dbReference type="FunFam" id="1.10.287.3510:FF:000001">
    <property type="entry name" value="NADH-quinone oxidoreductase subunit K"/>
    <property type="match status" value="1"/>
</dbReference>
<dbReference type="Gene3D" id="1.10.287.3510">
    <property type="match status" value="1"/>
</dbReference>
<dbReference type="HAMAP" id="MF_01456">
    <property type="entry name" value="NDH1_NuoK"/>
    <property type="match status" value="1"/>
</dbReference>
<dbReference type="InterPro" id="IPR001133">
    <property type="entry name" value="NADH_UbQ_OxRdtase_chain4L/K"/>
</dbReference>
<dbReference type="InterPro" id="IPR039428">
    <property type="entry name" value="NUOK/Mnh_C1-like"/>
</dbReference>
<dbReference type="NCBIfam" id="NF004320">
    <property type="entry name" value="PRK05715.1-2"/>
    <property type="match status" value="1"/>
</dbReference>
<dbReference type="NCBIfam" id="NF004322">
    <property type="entry name" value="PRK05715.1-4"/>
    <property type="match status" value="1"/>
</dbReference>
<dbReference type="NCBIfam" id="NF004323">
    <property type="entry name" value="PRK05715.1-5"/>
    <property type="match status" value="1"/>
</dbReference>
<dbReference type="PANTHER" id="PTHR11434:SF16">
    <property type="entry name" value="NADH-UBIQUINONE OXIDOREDUCTASE CHAIN 4L"/>
    <property type="match status" value="1"/>
</dbReference>
<dbReference type="PANTHER" id="PTHR11434">
    <property type="entry name" value="NADH-UBIQUINONE OXIDOREDUCTASE SUBUNIT ND4L"/>
    <property type="match status" value="1"/>
</dbReference>
<dbReference type="Pfam" id="PF00420">
    <property type="entry name" value="Oxidored_q2"/>
    <property type="match status" value="1"/>
</dbReference>
<feature type="chain" id="PRO_0000360360" description="NAD(P)H-quinone oxidoreductase subunit 4L, chloroplastic">
    <location>
        <begin position="1"/>
        <end position="100"/>
    </location>
</feature>
<feature type="transmembrane region" description="Helical" evidence="1">
    <location>
        <begin position="1"/>
        <end position="21"/>
    </location>
</feature>
<feature type="transmembrane region" description="Helical" evidence="1">
    <location>
        <begin position="29"/>
        <end position="49"/>
    </location>
</feature>
<feature type="transmembrane region" description="Helical" evidence="1">
    <location>
        <begin position="60"/>
        <end position="80"/>
    </location>
</feature>
<keyword id="KW-0150">Chloroplast</keyword>
<keyword id="KW-0472">Membrane</keyword>
<keyword id="KW-0520">NAD</keyword>
<keyword id="KW-0521">NADP</keyword>
<keyword id="KW-0934">Plastid</keyword>
<keyword id="KW-0618">Plastoquinone</keyword>
<keyword id="KW-0874">Quinone</keyword>
<keyword id="KW-1185">Reference proteome</keyword>
<keyword id="KW-0793">Thylakoid</keyword>
<keyword id="KW-1278">Translocase</keyword>
<keyword id="KW-0812">Transmembrane</keyword>
<keyword id="KW-1133">Transmembrane helix</keyword>
<keyword id="KW-0813">Transport</keyword>
<organism>
    <name type="scientific">Physcomitrium patens</name>
    <name type="common">Spreading-leaved earth moss</name>
    <name type="synonym">Physcomitrella patens</name>
    <dbReference type="NCBI Taxonomy" id="3218"/>
    <lineage>
        <taxon>Eukaryota</taxon>
        <taxon>Viridiplantae</taxon>
        <taxon>Streptophyta</taxon>
        <taxon>Embryophyta</taxon>
        <taxon>Bryophyta</taxon>
        <taxon>Bryophytina</taxon>
        <taxon>Bryopsida</taxon>
        <taxon>Funariidae</taxon>
        <taxon>Funariales</taxon>
        <taxon>Funariaceae</taxon>
        <taxon>Physcomitrium</taxon>
    </lineage>
</organism>
<sequence>MLEHILSLGAYLFCIGIFGLITSRNMVRALMCLELIFNAVNINLITFSNSFDTQQAKGEIFAIFIIAIAAAEAAIGLAIVLAIYRNKNSTRIDQFNLLKW</sequence>
<reference key="1">
    <citation type="journal article" date="2003" name="Nucleic Acids Res.">
        <title>Complete chloroplast DNA sequence of the moss Physcomitrella patens: evidence for the loss and relocation of rpoA from the chloroplast to the nucleus.</title>
        <authorList>
            <person name="Sugiura C."/>
            <person name="Kobayashi Y."/>
            <person name="Setsuyuki A."/>
            <person name="Sugita C."/>
            <person name="Sugita M."/>
        </authorList>
    </citation>
    <scope>NUCLEOTIDE SEQUENCE [LARGE SCALE GENOMIC DNA]</scope>
    <source>
        <strain>cv. Gransden 2004</strain>
    </source>
</reference>
<protein>
    <recommendedName>
        <fullName evidence="1">NAD(P)H-quinone oxidoreductase subunit 4L, chloroplastic</fullName>
        <ecNumber evidence="1">7.1.1.-</ecNumber>
    </recommendedName>
    <alternativeName>
        <fullName evidence="1">NAD(P)H dehydrogenase subunit 4L</fullName>
    </alternativeName>
    <alternativeName>
        <fullName evidence="1">NADH-plastoquinone oxidoreductase subunit 4L</fullName>
    </alternativeName>
</protein>